<reference key="1">
    <citation type="journal article" date="2004" name="Nat. Genet.">
        <title>Reductive evolution suggested from the complete genome sequence of a plant-pathogenic phytoplasma.</title>
        <authorList>
            <person name="Oshima K."/>
            <person name="Kakizawa S."/>
            <person name="Nishigawa H."/>
            <person name="Jung H.-Y."/>
            <person name="Wei W."/>
            <person name="Suzuki S."/>
            <person name="Arashida R."/>
            <person name="Nakata D."/>
            <person name="Miyata S."/>
            <person name="Ugaki M."/>
            <person name="Namba S."/>
        </authorList>
    </citation>
    <scope>NUCLEOTIDE SEQUENCE [LARGE SCALE GENOMIC DNA]</scope>
    <source>
        <strain>OY-M</strain>
    </source>
</reference>
<evidence type="ECO:0000255" key="1">
    <source>
        <dbReference type="HAMAP-Rule" id="MF_01369"/>
    </source>
</evidence>
<evidence type="ECO:0000305" key="2"/>
<dbReference type="EMBL" id="AP006628">
    <property type="protein sequence ID" value="BAD04287.1"/>
    <property type="molecule type" value="Genomic_DNA"/>
</dbReference>
<dbReference type="SMR" id="Q6YR18"/>
<dbReference type="STRING" id="262768.PAM_202"/>
<dbReference type="KEGG" id="poy:PAM_202"/>
<dbReference type="eggNOG" id="COG0089">
    <property type="taxonomic scope" value="Bacteria"/>
</dbReference>
<dbReference type="HOGENOM" id="CLU_037562_3_2_14"/>
<dbReference type="BioCyc" id="OYEL262768:G1G26-248-MONOMER"/>
<dbReference type="Proteomes" id="UP000002523">
    <property type="component" value="Chromosome"/>
</dbReference>
<dbReference type="GO" id="GO:1990904">
    <property type="term" value="C:ribonucleoprotein complex"/>
    <property type="evidence" value="ECO:0007669"/>
    <property type="project" value="UniProtKB-KW"/>
</dbReference>
<dbReference type="GO" id="GO:0005840">
    <property type="term" value="C:ribosome"/>
    <property type="evidence" value="ECO:0007669"/>
    <property type="project" value="UniProtKB-KW"/>
</dbReference>
<dbReference type="GO" id="GO:0019843">
    <property type="term" value="F:rRNA binding"/>
    <property type="evidence" value="ECO:0007669"/>
    <property type="project" value="UniProtKB-UniRule"/>
</dbReference>
<dbReference type="GO" id="GO:0003735">
    <property type="term" value="F:structural constituent of ribosome"/>
    <property type="evidence" value="ECO:0007669"/>
    <property type="project" value="InterPro"/>
</dbReference>
<dbReference type="GO" id="GO:0006412">
    <property type="term" value="P:translation"/>
    <property type="evidence" value="ECO:0007669"/>
    <property type="project" value="UniProtKB-UniRule"/>
</dbReference>
<dbReference type="FunFam" id="3.30.70.330:FF:000001">
    <property type="entry name" value="50S ribosomal protein L23"/>
    <property type="match status" value="1"/>
</dbReference>
<dbReference type="Gene3D" id="3.30.70.330">
    <property type="match status" value="1"/>
</dbReference>
<dbReference type="HAMAP" id="MF_01369_B">
    <property type="entry name" value="Ribosomal_uL23_B"/>
    <property type="match status" value="1"/>
</dbReference>
<dbReference type="InterPro" id="IPR012677">
    <property type="entry name" value="Nucleotide-bd_a/b_plait_sf"/>
</dbReference>
<dbReference type="InterPro" id="IPR013025">
    <property type="entry name" value="Ribosomal_uL23-like"/>
</dbReference>
<dbReference type="InterPro" id="IPR012678">
    <property type="entry name" value="Ribosomal_uL23/eL15/eS24_sf"/>
</dbReference>
<dbReference type="NCBIfam" id="NF004363">
    <property type="entry name" value="PRK05738.2-4"/>
    <property type="match status" value="1"/>
</dbReference>
<dbReference type="PANTHER" id="PTHR11620">
    <property type="entry name" value="60S RIBOSOMAL PROTEIN L23A"/>
    <property type="match status" value="1"/>
</dbReference>
<dbReference type="Pfam" id="PF00276">
    <property type="entry name" value="Ribosomal_L23"/>
    <property type="match status" value="1"/>
</dbReference>
<dbReference type="SUPFAM" id="SSF54189">
    <property type="entry name" value="Ribosomal proteins S24e, L23 and L15e"/>
    <property type="match status" value="1"/>
</dbReference>
<name>RL23_ONYPE</name>
<keyword id="KW-0687">Ribonucleoprotein</keyword>
<keyword id="KW-0689">Ribosomal protein</keyword>
<keyword id="KW-0694">RNA-binding</keyword>
<keyword id="KW-0699">rRNA-binding</keyword>
<gene>
    <name evidence="1" type="primary">rplW</name>
    <name type="synonym">pam202</name>
    <name type="ordered locus">PAM_202</name>
</gene>
<organism>
    <name type="scientific">Onion yellows phytoplasma (strain OY-M)</name>
    <dbReference type="NCBI Taxonomy" id="262768"/>
    <lineage>
        <taxon>Bacteria</taxon>
        <taxon>Bacillati</taxon>
        <taxon>Mycoplasmatota</taxon>
        <taxon>Mollicutes</taxon>
        <taxon>Acholeplasmatales</taxon>
        <taxon>Acholeplasmataceae</taxon>
        <taxon>Candidatus Phytoplasma</taxon>
        <taxon>16SrI (Aster yellows group)</taxon>
    </lineage>
</organism>
<proteinExistence type="inferred from homology"/>
<comment type="function">
    <text evidence="1">One of the early assembly proteins it binds 23S rRNA. One of the proteins that surrounds the polypeptide exit tunnel on the outside of the ribosome. Forms the main docking site for trigger factor binding to the ribosome.</text>
</comment>
<comment type="subunit">
    <text evidence="1">Part of the 50S ribosomal subunit. Contacts protein L29, and trigger factor when it is bound to the ribosome.</text>
</comment>
<comment type="similarity">
    <text evidence="1">Belongs to the universal ribosomal protein uL23 family.</text>
</comment>
<feature type="chain" id="PRO_1000215040" description="Large ribosomal subunit protein uL23">
    <location>
        <begin position="1"/>
        <end position="96"/>
    </location>
</feature>
<accession>Q6YR18</accession>
<sequence length="96" mass="11010">MNKYYDLVKAPIITELTNKLIERQNKYTFKVAKTANKVEIKKALESIFQVKVLSVNTRNVLPQFKRKGKFEGYTSGYKKAICKVAPGQKIEILANE</sequence>
<protein>
    <recommendedName>
        <fullName evidence="1">Large ribosomal subunit protein uL23</fullName>
    </recommendedName>
    <alternativeName>
        <fullName evidence="2">50S ribosomal protein L23</fullName>
    </alternativeName>
</protein>